<dbReference type="EC" id="3.5.4.19" evidence="1"/>
<dbReference type="EMBL" id="CP000109">
    <property type="protein sequence ID" value="ABB40813.1"/>
    <property type="molecule type" value="Genomic_DNA"/>
</dbReference>
<dbReference type="SMR" id="Q31J60"/>
<dbReference type="STRING" id="317025.Tcr_0217"/>
<dbReference type="KEGG" id="tcx:Tcr_0217"/>
<dbReference type="eggNOG" id="COG0139">
    <property type="taxonomic scope" value="Bacteria"/>
</dbReference>
<dbReference type="HOGENOM" id="CLU_048577_5_2_6"/>
<dbReference type="OrthoDB" id="9795769at2"/>
<dbReference type="UniPathway" id="UPA00031">
    <property type="reaction ID" value="UER00008"/>
</dbReference>
<dbReference type="GO" id="GO:0005737">
    <property type="term" value="C:cytoplasm"/>
    <property type="evidence" value="ECO:0007669"/>
    <property type="project" value="UniProtKB-SubCell"/>
</dbReference>
<dbReference type="GO" id="GO:0000287">
    <property type="term" value="F:magnesium ion binding"/>
    <property type="evidence" value="ECO:0007669"/>
    <property type="project" value="UniProtKB-UniRule"/>
</dbReference>
<dbReference type="GO" id="GO:0004635">
    <property type="term" value="F:phosphoribosyl-AMP cyclohydrolase activity"/>
    <property type="evidence" value="ECO:0007669"/>
    <property type="project" value="UniProtKB-UniRule"/>
</dbReference>
<dbReference type="GO" id="GO:0008270">
    <property type="term" value="F:zinc ion binding"/>
    <property type="evidence" value="ECO:0007669"/>
    <property type="project" value="UniProtKB-UniRule"/>
</dbReference>
<dbReference type="GO" id="GO:0000105">
    <property type="term" value="P:L-histidine biosynthetic process"/>
    <property type="evidence" value="ECO:0007669"/>
    <property type="project" value="UniProtKB-UniRule"/>
</dbReference>
<dbReference type="FunFam" id="3.10.20.810:FF:000001">
    <property type="entry name" value="Histidine biosynthesis bifunctional protein HisIE"/>
    <property type="match status" value="1"/>
</dbReference>
<dbReference type="Gene3D" id="3.10.20.810">
    <property type="entry name" value="Phosphoribosyl-AMP cyclohydrolase"/>
    <property type="match status" value="1"/>
</dbReference>
<dbReference type="HAMAP" id="MF_01021">
    <property type="entry name" value="HisI"/>
    <property type="match status" value="1"/>
</dbReference>
<dbReference type="InterPro" id="IPR026660">
    <property type="entry name" value="PRA-CH"/>
</dbReference>
<dbReference type="InterPro" id="IPR002496">
    <property type="entry name" value="PRib_AMP_CycHydrolase_dom"/>
</dbReference>
<dbReference type="InterPro" id="IPR038019">
    <property type="entry name" value="PRib_AMP_CycHydrolase_sf"/>
</dbReference>
<dbReference type="NCBIfam" id="NF000768">
    <property type="entry name" value="PRK00051.1"/>
    <property type="match status" value="1"/>
</dbReference>
<dbReference type="PANTHER" id="PTHR42945">
    <property type="entry name" value="HISTIDINE BIOSYNTHESIS BIFUNCTIONAL PROTEIN"/>
    <property type="match status" value="1"/>
</dbReference>
<dbReference type="PANTHER" id="PTHR42945:SF1">
    <property type="entry name" value="HISTIDINE BIOSYNTHESIS BIFUNCTIONAL PROTEIN HIS7"/>
    <property type="match status" value="1"/>
</dbReference>
<dbReference type="Pfam" id="PF01502">
    <property type="entry name" value="PRA-CH"/>
    <property type="match status" value="1"/>
</dbReference>
<dbReference type="SUPFAM" id="SSF141734">
    <property type="entry name" value="HisI-like"/>
    <property type="match status" value="1"/>
</dbReference>
<name>HIS3_HYDCU</name>
<reference key="1">
    <citation type="journal article" date="2006" name="PLoS Biol.">
        <title>The genome of deep-sea vent chemolithoautotroph Thiomicrospira crunogena XCL-2.</title>
        <authorList>
            <person name="Scott K.M."/>
            <person name="Sievert S.M."/>
            <person name="Abril F.N."/>
            <person name="Ball L.A."/>
            <person name="Barrett C.J."/>
            <person name="Blake R.A."/>
            <person name="Boller A.J."/>
            <person name="Chain P.S.G."/>
            <person name="Clark J.A."/>
            <person name="Davis C.R."/>
            <person name="Detter C."/>
            <person name="Do K.F."/>
            <person name="Dobrinski K.P."/>
            <person name="Faza B.I."/>
            <person name="Fitzpatrick K.A."/>
            <person name="Freyermuth S.K."/>
            <person name="Harmer T.L."/>
            <person name="Hauser L.J."/>
            <person name="Huegler M."/>
            <person name="Kerfeld C.A."/>
            <person name="Klotz M.G."/>
            <person name="Kong W.W."/>
            <person name="Land M."/>
            <person name="Lapidus A."/>
            <person name="Larimer F.W."/>
            <person name="Longo D.L."/>
            <person name="Lucas S."/>
            <person name="Malfatti S.A."/>
            <person name="Massey S.E."/>
            <person name="Martin D.D."/>
            <person name="McCuddin Z."/>
            <person name="Meyer F."/>
            <person name="Moore J.L."/>
            <person name="Ocampo L.H. Jr."/>
            <person name="Paul J.H."/>
            <person name="Paulsen I.T."/>
            <person name="Reep D.K."/>
            <person name="Ren Q."/>
            <person name="Ross R.L."/>
            <person name="Sato P.Y."/>
            <person name="Thomas P."/>
            <person name="Tinkham L.E."/>
            <person name="Zeruth G.T."/>
        </authorList>
    </citation>
    <scope>NUCLEOTIDE SEQUENCE [LARGE SCALE GENOMIC DNA]</scope>
    <source>
        <strain>DSM 25203 / XCL-2</strain>
    </source>
</reference>
<keyword id="KW-0028">Amino-acid biosynthesis</keyword>
<keyword id="KW-0963">Cytoplasm</keyword>
<keyword id="KW-0368">Histidine biosynthesis</keyword>
<keyword id="KW-0378">Hydrolase</keyword>
<keyword id="KW-0460">Magnesium</keyword>
<keyword id="KW-0479">Metal-binding</keyword>
<keyword id="KW-0862">Zinc</keyword>
<comment type="function">
    <text evidence="1">Catalyzes the hydrolysis of the adenine ring of phosphoribosyl-AMP.</text>
</comment>
<comment type="catalytic activity">
    <reaction evidence="1">
        <text>1-(5-phospho-beta-D-ribosyl)-5'-AMP + H2O = 1-(5-phospho-beta-D-ribosyl)-5-[(5-phospho-beta-D-ribosylamino)methylideneamino]imidazole-4-carboxamide</text>
        <dbReference type="Rhea" id="RHEA:20049"/>
        <dbReference type="ChEBI" id="CHEBI:15377"/>
        <dbReference type="ChEBI" id="CHEBI:58435"/>
        <dbReference type="ChEBI" id="CHEBI:59457"/>
        <dbReference type="EC" id="3.5.4.19"/>
    </reaction>
</comment>
<comment type="cofactor">
    <cofactor evidence="1">
        <name>Mg(2+)</name>
        <dbReference type="ChEBI" id="CHEBI:18420"/>
    </cofactor>
    <text evidence="1">Binds 1 Mg(2+) ion per subunit.</text>
</comment>
<comment type="cofactor">
    <cofactor evidence="1">
        <name>Zn(2+)</name>
        <dbReference type="ChEBI" id="CHEBI:29105"/>
    </cofactor>
    <text evidence="1">Binds 1 zinc ion per subunit.</text>
</comment>
<comment type="pathway">
    <text evidence="1">Amino-acid biosynthesis; L-histidine biosynthesis; L-histidine from 5-phospho-alpha-D-ribose 1-diphosphate: step 3/9.</text>
</comment>
<comment type="subunit">
    <text evidence="1">Homodimer.</text>
</comment>
<comment type="subcellular location">
    <subcellularLocation>
        <location evidence="1">Cytoplasm</location>
    </subcellularLocation>
</comment>
<comment type="similarity">
    <text evidence="1">Belongs to the PRA-CH family.</text>
</comment>
<evidence type="ECO:0000255" key="1">
    <source>
        <dbReference type="HAMAP-Rule" id="MF_01021"/>
    </source>
</evidence>
<organism>
    <name type="scientific">Hydrogenovibrio crunogenus (strain DSM 25203 / XCL-2)</name>
    <name type="common">Thiomicrospira crunogena</name>
    <dbReference type="NCBI Taxonomy" id="317025"/>
    <lineage>
        <taxon>Bacteria</taxon>
        <taxon>Pseudomonadati</taxon>
        <taxon>Pseudomonadota</taxon>
        <taxon>Gammaproteobacteria</taxon>
        <taxon>Thiotrichales</taxon>
        <taxon>Piscirickettsiaceae</taxon>
        <taxon>Hydrogenovibrio</taxon>
    </lineage>
</organism>
<feature type="chain" id="PRO_0000229844" description="Phosphoribosyl-AMP cyclohydrolase">
    <location>
        <begin position="1"/>
        <end position="147"/>
    </location>
</feature>
<feature type="binding site" evidence="1">
    <location>
        <position position="97"/>
    </location>
    <ligand>
        <name>Mg(2+)</name>
        <dbReference type="ChEBI" id="CHEBI:18420"/>
    </ligand>
</feature>
<feature type="binding site" evidence="1">
    <location>
        <position position="98"/>
    </location>
    <ligand>
        <name>Zn(2+)</name>
        <dbReference type="ChEBI" id="CHEBI:29105"/>
        <note>ligand shared between dimeric partners</note>
    </ligand>
</feature>
<feature type="binding site" evidence="1">
    <location>
        <position position="99"/>
    </location>
    <ligand>
        <name>Mg(2+)</name>
        <dbReference type="ChEBI" id="CHEBI:18420"/>
    </ligand>
</feature>
<feature type="binding site" evidence="1">
    <location>
        <position position="101"/>
    </location>
    <ligand>
        <name>Mg(2+)</name>
        <dbReference type="ChEBI" id="CHEBI:18420"/>
    </ligand>
</feature>
<feature type="binding site" evidence="1">
    <location>
        <position position="114"/>
    </location>
    <ligand>
        <name>Zn(2+)</name>
        <dbReference type="ChEBI" id="CHEBI:29105"/>
        <note>ligand shared between dimeric partners</note>
    </ligand>
</feature>
<feature type="binding site" evidence="1">
    <location>
        <position position="121"/>
    </location>
    <ligand>
        <name>Zn(2+)</name>
        <dbReference type="ChEBI" id="CHEBI:29105"/>
        <note>ligand shared between dimeric partners</note>
    </ligand>
</feature>
<sequence length="147" mass="16905">MSQQLTFKQLEKAQQGDSFDWEAVKKQVKYDDNGLIPAIAQQFDSKEVLMMAWMNEAALQETLETGRVCYWSRSRQSYWRKGEESGQIQLLKDLRFDCDGDAILLLVDQTGPACHTGRKSCFYTAIHDHQAKILTNPIIDPEALYKK</sequence>
<protein>
    <recommendedName>
        <fullName evidence="1">Phosphoribosyl-AMP cyclohydrolase</fullName>
        <shortName evidence="1">PRA-CH</shortName>
        <ecNumber evidence="1">3.5.4.19</ecNumber>
    </recommendedName>
</protein>
<accession>Q31J60</accession>
<gene>
    <name evidence="1" type="primary">hisI</name>
    <name type="ordered locus">Tcr_0217</name>
</gene>
<proteinExistence type="inferred from homology"/>